<gene>
    <name type="primary">OEP24</name>
    <name type="ORF">OsI_14389</name>
</gene>
<organism>
    <name type="scientific">Oryza sativa subsp. indica</name>
    <name type="common">Rice</name>
    <dbReference type="NCBI Taxonomy" id="39946"/>
    <lineage>
        <taxon>Eukaryota</taxon>
        <taxon>Viridiplantae</taxon>
        <taxon>Streptophyta</taxon>
        <taxon>Embryophyta</taxon>
        <taxon>Tracheophyta</taxon>
        <taxon>Spermatophyta</taxon>
        <taxon>Magnoliopsida</taxon>
        <taxon>Liliopsida</taxon>
        <taxon>Poales</taxon>
        <taxon>Poaceae</taxon>
        <taxon>BOP clade</taxon>
        <taxon>Oryzoideae</taxon>
        <taxon>Oryzeae</taxon>
        <taxon>Oryzinae</taxon>
        <taxon>Oryza</taxon>
        <taxon>Oryza sativa</taxon>
    </lineage>
</organism>
<accession>B8ANR3</accession>
<proteinExistence type="inferred from homology"/>
<protein>
    <recommendedName>
        <fullName>Outer envelope pore protein 24, chloroplastic</fullName>
    </recommendedName>
    <alternativeName>
        <fullName>Chloroplastic outer envelope pore protein of 24 kDa</fullName>
    </alternativeName>
</protein>
<reference key="1">
    <citation type="journal article" date="2005" name="PLoS Biol.">
        <title>The genomes of Oryza sativa: a history of duplications.</title>
        <authorList>
            <person name="Yu J."/>
            <person name="Wang J."/>
            <person name="Lin W."/>
            <person name="Li S."/>
            <person name="Li H."/>
            <person name="Zhou J."/>
            <person name="Ni P."/>
            <person name="Dong W."/>
            <person name="Hu S."/>
            <person name="Zeng C."/>
            <person name="Zhang J."/>
            <person name="Zhang Y."/>
            <person name="Li R."/>
            <person name="Xu Z."/>
            <person name="Li S."/>
            <person name="Li X."/>
            <person name="Zheng H."/>
            <person name="Cong L."/>
            <person name="Lin L."/>
            <person name="Yin J."/>
            <person name="Geng J."/>
            <person name="Li G."/>
            <person name="Shi J."/>
            <person name="Liu J."/>
            <person name="Lv H."/>
            <person name="Li J."/>
            <person name="Wang J."/>
            <person name="Deng Y."/>
            <person name="Ran L."/>
            <person name="Shi X."/>
            <person name="Wang X."/>
            <person name="Wu Q."/>
            <person name="Li C."/>
            <person name="Ren X."/>
            <person name="Wang J."/>
            <person name="Wang X."/>
            <person name="Li D."/>
            <person name="Liu D."/>
            <person name="Zhang X."/>
            <person name="Ji Z."/>
            <person name="Zhao W."/>
            <person name="Sun Y."/>
            <person name="Zhang Z."/>
            <person name="Bao J."/>
            <person name="Han Y."/>
            <person name="Dong L."/>
            <person name="Ji J."/>
            <person name="Chen P."/>
            <person name="Wu S."/>
            <person name="Liu J."/>
            <person name="Xiao Y."/>
            <person name="Bu D."/>
            <person name="Tan J."/>
            <person name="Yang L."/>
            <person name="Ye C."/>
            <person name="Zhang J."/>
            <person name="Xu J."/>
            <person name="Zhou Y."/>
            <person name="Yu Y."/>
            <person name="Zhang B."/>
            <person name="Zhuang S."/>
            <person name="Wei H."/>
            <person name="Liu B."/>
            <person name="Lei M."/>
            <person name="Yu H."/>
            <person name="Li Y."/>
            <person name="Xu H."/>
            <person name="Wei S."/>
            <person name="He X."/>
            <person name="Fang L."/>
            <person name="Zhang Z."/>
            <person name="Zhang Y."/>
            <person name="Huang X."/>
            <person name="Su Z."/>
            <person name="Tong W."/>
            <person name="Li J."/>
            <person name="Tong Z."/>
            <person name="Li S."/>
            <person name="Ye J."/>
            <person name="Wang L."/>
            <person name="Fang L."/>
            <person name="Lei T."/>
            <person name="Chen C.-S."/>
            <person name="Chen H.-C."/>
            <person name="Xu Z."/>
            <person name="Li H."/>
            <person name="Huang H."/>
            <person name="Zhang F."/>
            <person name="Xu H."/>
            <person name="Li N."/>
            <person name="Zhao C."/>
            <person name="Li S."/>
            <person name="Dong L."/>
            <person name="Huang Y."/>
            <person name="Li L."/>
            <person name="Xi Y."/>
            <person name="Qi Q."/>
            <person name="Li W."/>
            <person name="Zhang B."/>
            <person name="Hu W."/>
            <person name="Zhang Y."/>
            <person name="Tian X."/>
            <person name="Jiao Y."/>
            <person name="Liang X."/>
            <person name="Jin J."/>
            <person name="Gao L."/>
            <person name="Zheng W."/>
            <person name="Hao B."/>
            <person name="Liu S.-M."/>
            <person name="Wang W."/>
            <person name="Yuan L."/>
            <person name="Cao M."/>
            <person name="McDermott J."/>
            <person name="Samudrala R."/>
            <person name="Wang J."/>
            <person name="Wong G.K.-S."/>
            <person name="Yang H."/>
        </authorList>
    </citation>
    <scope>NUCLEOTIDE SEQUENCE [LARGE SCALE GENOMIC DNA]</scope>
    <source>
        <strain>cv. 93-11</strain>
    </source>
</reference>
<feature type="chain" id="PRO_0000415581" description="Outer envelope pore protein 24, chloroplastic">
    <location>
        <begin position="1"/>
        <end position="224"/>
    </location>
</feature>
<feature type="topological domain" description="Cytoplasmic" evidence="2">
    <location>
        <position position="1"/>
    </location>
</feature>
<feature type="transmembrane region" description="Beta stranded; Name=1" evidence="2">
    <location>
        <begin position="2"/>
        <end position="11"/>
    </location>
</feature>
<feature type="topological domain" description="Chloroplast intermembrane" evidence="2">
    <location>
        <begin position="12"/>
        <end position="16"/>
    </location>
</feature>
<feature type="transmembrane region" description="Beta stranded; Name=2" evidence="2">
    <location>
        <begin position="17"/>
        <end position="28"/>
    </location>
</feature>
<feature type="topological domain" description="Cytoplasmic" evidence="2">
    <location>
        <begin position="29"/>
        <end position="32"/>
    </location>
</feature>
<feature type="transmembrane region" description="Beta stranded; Name=3" evidence="2">
    <location>
        <begin position="33"/>
        <end position="42"/>
    </location>
</feature>
<feature type="topological domain" description="Chloroplast intermembrane" evidence="2">
    <location>
        <begin position="43"/>
        <end position="55"/>
    </location>
</feature>
<feature type="transmembrane region" description="Beta stranded; Name=4" evidence="2">
    <location>
        <begin position="56"/>
        <end position="64"/>
    </location>
</feature>
<feature type="topological domain" description="Cytoplasmic" evidence="2">
    <location>
        <begin position="65"/>
        <end position="70"/>
    </location>
</feature>
<feature type="transmembrane region" description="Beta stranded; Name=5" evidence="2">
    <location>
        <begin position="71"/>
        <end position="80"/>
    </location>
</feature>
<feature type="topological domain" description="Chloroplast intermembrane" evidence="2">
    <location>
        <begin position="81"/>
        <end position="101"/>
    </location>
</feature>
<feature type="transmembrane region" description="Beta stranded; Name=6" evidence="2">
    <location>
        <begin position="102"/>
        <end position="111"/>
    </location>
</feature>
<feature type="topological domain" description="Cytoplasmic" evidence="2">
    <location>
        <begin position="112"/>
        <end position="116"/>
    </location>
</feature>
<feature type="transmembrane region" description="Beta stranded; Name=7" evidence="2">
    <location>
        <begin position="117"/>
        <end position="126"/>
    </location>
</feature>
<feature type="topological domain" description="Chloroplast intermembrane" evidence="2">
    <location>
        <begin position="127"/>
        <end position="130"/>
    </location>
</feature>
<feature type="transmembrane region" description="Beta stranded; Name=8" evidence="2">
    <location>
        <begin position="131"/>
        <end position="140"/>
    </location>
</feature>
<feature type="topological domain" description="Cytoplasmic" evidence="2">
    <location>
        <begin position="141"/>
        <end position="154"/>
    </location>
</feature>
<feature type="transmembrane region" description="Beta stranded; Name=9" evidence="2">
    <location>
        <begin position="155"/>
        <end position="166"/>
    </location>
</feature>
<feature type="topological domain" description="Chloroplast intermembrane" evidence="2">
    <location>
        <begin position="167"/>
        <end position="169"/>
    </location>
</feature>
<feature type="transmembrane region" description="Beta stranded; Name=10" evidence="2">
    <location>
        <begin position="170"/>
        <end position="178"/>
    </location>
</feature>
<feature type="topological domain" description="Cytoplasmic" evidence="2">
    <location>
        <begin position="179"/>
        <end position="180"/>
    </location>
</feature>
<feature type="transmembrane region" description="Beta stranded; Name=11" evidence="2">
    <location>
        <begin position="181"/>
        <end position="189"/>
    </location>
</feature>
<feature type="topological domain" description="Chloroplast intermembrane" evidence="2">
    <location>
        <begin position="190"/>
        <end position="212"/>
    </location>
</feature>
<feature type="transmembrane region" description="Beta stranded; Name=12" evidence="2">
    <location>
        <begin position="213"/>
        <end position="222"/>
    </location>
</feature>
<feature type="topological domain" description="Cytoplasmic" evidence="2">
    <location>
        <begin position="223"/>
        <end position="224"/>
    </location>
</feature>
<evidence type="ECO:0000250" key="1"/>
<evidence type="ECO:0000255" key="2"/>
<evidence type="ECO:0000305" key="3"/>
<dbReference type="EMBL" id="CM000128">
    <property type="protein sequence ID" value="EEC76564.1"/>
    <property type="molecule type" value="Genomic_DNA"/>
</dbReference>
<dbReference type="STRING" id="39946.B8ANR3"/>
<dbReference type="EnsemblPlants" id="BGIOSGA013974-TA">
    <property type="protein sequence ID" value="BGIOSGA013974-PA"/>
    <property type="gene ID" value="BGIOSGA013974"/>
</dbReference>
<dbReference type="EnsemblPlants" id="OsKYG_03g0042370.01">
    <property type="protein sequence ID" value="OsKYG_03g0042370.01"/>
    <property type="gene ID" value="OsKYG_03g0042370"/>
</dbReference>
<dbReference type="EnsemblPlants" id="OsLaMu_03g0042180.01">
    <property type="protein sequence ID" value="OsLaMu_03g0042180.01"/>
    <property type="gene ID" value="OsLaMu_03g0042180"/>
</dbReference>
<dbReference type="EnsemblPlants" id="OsLiXu_Ung0015030.01">
    <property type="protein sequence ID" value="OsLiXu_Ung0015030.01"/>
    <property type="gene ID" value="OsLiXu_Ung0015030"/>
</dbReference>
<dbReference type="EnsemblPlants" id="OsMH63_03G042070_01">
    <property type="protein sequence ID" value="OsMH63_03G042070_01"/>
    <property type="gene ID" value="OsMH63_03G042070"/>
</dbReference>
<dbReference type="Gramene" id="BGIOSGA013974-TA">
    <property type="protein sequence ID" value="BGIOSGA013974-PA"/>
    <property type="gene ID" value="BGIOSGA013974"/>
</dbReference>
<dbReference type="Gramene" id="OsKYG_03g0042370.01">
    <property type="protein sequence ID" value="OsKYG_03g0042370.01"/>
    <property type="gene ID" value="OsKYG_03g0042370"/>
</dbReference>
<dbReference type="Gramene" id="OsLaMu_03g0042180.01">
    <property type="protein sequence ID" value="OsLaMu_03g0042180.01"/>
    <property type="gene ID" value="OsLaMu_03g0042180"/>
</dbReference>
<dbReference type="Gramene" id="OsLiXu_Ung0015030.01">
    <property type="protein sequence ID" value="OsLiXu_Ung0015030.01"/>
    <property type="gene ID" value="OsLiXu_Ung0015030"/>
</dbReference>
<dbReference type="Gramene" id="OsMH63_03G042070_01">
    <property type="protein sequence ID" value="OsMH63_03G042070_01"/>
    <property type="gene ID" value="OsMH63_03G042070"/>
</dbReference>
<dbReference type="HOGENOM" id="CLU_077010_0_0_1"/>
<dbReference type="OMA" id="AESTWNF"/>
<dbReference type="Proteomes" id="UP000007015">
    <property type="component" value="Chromosome 3"/>
</dbReference>
<dbReference type="GO" id="GO:0009707">
    <property type="term" value="C:chloroplast outer membrane"/>
    <property type="evidence" value="ECO:0007669"/>
    <property type="project" value="UniProtKB-SubCell"/>
</dbReference>
<dbReference type="GO" id="GO:0034426">
    <property type="term" value="C:etioplast membrane"/>
    <property type="evidence" value="ECO:0007669"/>
    <property type="project" value="UniProtKB-SubCell"/>
</dbReference>
<dbReference type="GO" id="GO:0046930">
    <property type="term" value="C:pore complex"/>
    <property type="evidence" value="ECO:0007669"/>
    <property type="project" value="UniProtKB-KW"/>
</dbReference>
<dbReference type="GO" id="GO:0015288">
    <property type="term" value="F:porin activity"/>
    <property type="evidence" value="ECO:0007669"/>
    <property type="project" value="UniProtKB-KW"/>
</dbReference>
<dbReference type="GO" id="GO:0022843">
    <property type="term" value="F:voltage-gated monoatomic cation channel activity"/>
    <property type="evidence" value="ECO:0007669"/>
    <property type="project" value="InterPro"/>
</dbReference>
<dbReference type="GO" id="GO:0034765">
    <property type="term" value="P:regulation of monoatomic ion transmembrane transport"/>
    <property type="evidence" value="ECO:0007669"/>
    <property type="project" value="InterPro"/>
</dbReference>
<dbReference type="InterPro" id="IPR034626">
    <property type="entry name" value="OEP24"/>
</dbReference>
<dbReference type="PANTHER" id="PTHR35284">
    <property type="entry name" value="OUTER ENVELOPE PORE PROTEIN 24A, CHLOROPLASTIC-RELATED"/>
    <property type="match status" value="1"/>
</dbReference>
<dbReference type="PANTHER" id="PTHR35284:SF1">
    <property type="entry name" value="OUTER ENVELOPE PORE PROTEIN 24A, CHLOROPLASTIC-RELATED"/>
    <property type="match status" value="1"/>
</dbReference>
<name>OEP24_ORYSI</name>
<keyword id="KW-0150">Chloroplast</keyword>
<keyword id="KW-0406">Ion transport</keyword>
<keyword id="KW-0472">Membrane</keyword>
<keyword id="KW-0934">Plastid</keyword>
<keyword id="KW-1002">Plastid outer membrane</keyword>
<keyword id="KW-0626">Porin</keyword>
<keyword id="KW-1185">Reference proteome</keyword>
<keyword id="KW-0812">Transmembrane</keyword>
<keyword id="KW-1134">Transmembrane beta strand</keyword>
<keyword id="KW-0813">Transport</keyword>
<sequence>MKATVKGRYEGDKATAAATLAFTPSAADLRFKASATDAAFARGPSLEGLTLTLEKPGSFLLDLKPHSKDVRFQFMNSALLLDRRVSLTYTHSTTLSPGPAKPPARTALDGSLTFDPANKLSLSHTLGSSGCRVKYSYAHGQDRLTTIEPCFDTANNAWDFAVTRKFQGGDAIKATYQASTKLLALDWTRDSKIGASFKVAASFDLSDQSKAPKLIAESTWNYEI</sequence>
<comment type="function">
    <text evidence="1">High-conductance voltage-dependent solute channel with a slight selectivity for cations transporting triosephosphates, dicarboxylic acids, ATP, inorganic phosphate (Pi), sugars, and positively or negatively charged amino acids.</text>
</comment>
<comment type="subunit">
    <text evidence="1">Homooligomers form large rather nonselective pores in plastidial outer membranes.</text>
</comment>
<comment type="subcellular location">
    <subcellularLocation>
        <location evidence="1">Plastid</location>
        <location evidence="1">Etioplast membrane</location>
        <topology evidence="1">Multi-pass membrane protein</topology>
    </subcellularLocation>
    <subcellularLocation>
        <location evidence="1">Plastid</location>
        <location evidence="1">Chloroplast outer membrane</location>
        <topology evidence="1">Multi-pass membrane protein</topology>
    </subcellularLocation>
    <text evidence="1">Present in non-green root plastids.</text>
</comment>
<comment type="similarity">
    <text evidence="3">Belongs to the plastid outer envelope porin OEP24 (TC 1.B.28.1) family.</text>
</comment>